<protein>
    <recommendedName>
        <fullName evidence="8">ESX-5 secretion system protein EccC5</fullName>
    </recommendedName>
    <alternativeName>
        <fullName evidence="7">ESX conserved component C5</fullName>
    </alternativeName>
    <alternativeName>
        <fullName evidence="8">Type VII secretion system protein EccC5</fullName>
        <shortName evidence="8">T7SS protein EccC5</shortName>
    </alternativeName>
</protein>
<gene>
    <name evidence="7" type="primary">eccC5</name>
    <name type="ordered locus">Rv1783</name>
</gene>
<sequence>MKRGFARPTPEKPPVIKPENIVLSTPLSIPPPEGKPWWLIVVGVVVVGLLGGMVAMVFASGSHVFGGIGSIFPLFMMVGIMMMMFRGMGGGQQQMSRPKLDAMRAQFMLMLDMLRETAQESADSMDANYRWFHPAPNTLAAAVGSPRMWERKPDGKDLNFGVVRVGVGMTRPEVTWGEPQNMPTDIELEPVTGKALQEFGRYQSVVYNLPKMVSLLVEPWYALVGEREQVLGLMRAIICQLAFSHGPDHVQMIVVSSDLDQWDWVKWLPHFGDSRRHDAAGNARMVYTSVREFAAEQAELFAGRGSFTPRHASSSAQTPTPHTVIIADVDDPQWEYVISAEGVDGVTFFDLTGSSMWTDIPERKLQFDKTGVIEALPRDRDTWMVIDDKAWFFALTDQVSIAEAEEFAQKLAQWRLAEAYEEIGQRVAHIGARDILSYYGIDDPGNIDFDSLWASRTDTMGRSRLRAPFGNRSDNGELLFLDMKSLDEGGDGPHGVMSGTTGSGKSTLVRTVIESLMLSHPPEELQFVLADLKGGSAVKPFAGVPHVSRIITDLEEDQALMERFLDALWGEIARRKAICDSAGVDDAKEYNSVRARMRARGQDMAPLPMLVVVIDEFYEWFRIMPTAVDVLDSIGRQGRAYWIHLMMASQTIESRAEKLMENMGYRLVLKARTAGAAQAAGVPNAVNLPAQAGLGYFRKSLEDIIRFQAEFLWRDYFQPGVSIDGEEAPALVHSIDYIRPQLFTNSFTPLEVSVGGPDIEPVVAQPNGEVLESDDIEGGEDEDEEGVRTPKVGTVIIDQLRKIKFEPYRLWQPPLTQPVAIDDLVNRFLGRPWHKEYGSACNLVFPIGIIDRPYKHDQPPWTVDTSGPGANVLILGAGGSGKTTALQTLICSAALTHTPQQVQFYCLAYSSTALTTVSRIPHVGEVAGPTDPYGVRRTVAELLALVRERKRSFLECGIASMEMFRRRKFGGEAGPVPDDGFGDVYLVIDNYRALAEENEVLIEQVNVIINQGPSFGVHVVVTADRESELRPPVRSGFGSRIELRLAAVEDAKLVRSRFAKDVPVKPGRGMVAVNYVRLDSDPQAGLHTLVARPALGSTPDNVFECDSVVAAVSRLTSAQAPPVRRLPARFGVEQVRELASRDTRQGVGAGGIAWAISELDLAPVYLNFAENSHLMVTGRRECGRTTTLATIMSEIGRLYAPGASSAPPPAPGRPSAQVWLVDPRRQLLTALGSDYVERFAYNLDGVVAMMGELAAALAGREPPPGLSAEELLSRSWWSGPEIFLIVDDIQQLPPGFDSPLHKAVPFVNRAADVGLHVIVTRTFGGWSSAGSDPMLRALHQANAPLLVMDADPDEGFIRGKMKGGPLPRGRGLLMAEDTGVFVQVAATEVRR</sequence>
<feature type="chain" id="PRO_0000393433" description="ESX-5 secretion system protein EccC5">
    <location>
        <begin position="1"/>
        <end position="1391"/>
    </location>
</feature>
<feature type="transmembrane region" description="Helical" evidence="2">
    <location>
        <begin position="38"/>
        <end position="58"/>
    </location>
</feature>
<feature type="transmembrane region" description="Helical" evidence="2">
    <location>
        <begin position="65"/>
        <end position="85"/>
    </location>
</feature>
<feature type="domain" description="FtsK 1" evidence="3">
    <location>
        <begin position="476"/>
        <end position="678"/>
    </location>
</feature>
<feature type="domain" description="FtsK 2" evidence="3">
    <location>
        <begin position="858"/>
        <end position="1052"/>
    </location>
</feature>
<feature type="domain" description="FtsK 3" evidence="3">
    <location>
        <begin position="1161"/>
        <end position="1354"/>
    </location>
</feature>
<feature type="binding site" evidence="3">
    <location>
        <begin position="499"/>
        <end position="506"/>
    </location>
    <ligand>
        <name>ATP</name>
        <dbReference type="ChEBI" id="CHEBI:30616"/>
    </ligand>
</feature>
<feature type="binding site" evidence="3">
    <location>
        <begin position="876"/>
        <end position="883"/>
    </location>
    <ligand>
        <name>ATP</name>
        <dbReference type="ChEBI" id="CHEBI:30616"/>
    </ligand>
</feature>
<feature type="binding site" evidence="3">
    <location>
        <begin position="1178"/>
        <end position="1185"/>
    </location>
    <ligand>
        <name>ATP</name>
        <dbReference type="ChEBI" id="CHEBI:30616"/>
    </ligand>
</feature>
<feature type="turn" evidence="11">
    <location>
        <begin position="125"/>
        <end position="128"/>
    </location>
</feature>
<feature type="helix" evidence="11">
    <location>
        <begin position="129"/>
        <end position="132"/>
    </location>
</feature>
<feature type="helix" evidence="11">
    <location>
        <begin position="136"/>
        <end position="138"/>
    </location>
</feature>
<feature type="turn" evidence="11">
    <location>
        <begin position="139"/>
        <end position="144"/>
    </location>
</feature>
<feature type="turn" evidence="11">
    <location>
        <begin position="146"/>
        <end position="149"/>
    </location>
</feature>
<feature type="strand" evidence="11">
    <location>
        <begin position="154"/>
        <end position="156"/>
    </location>
</feature>
<feature type="turn" evidence="11">
    <location>
        <begin position="158"/>
        <end position="161"/>
    </location>
</feature>
<feature type="strand" evidence="11">
    <location>
        <begin position="162"/>
        <end position="166"/>
    </location>
</feature>
<feature type="helix" evidence="11">
    <location>
        <begin position="200"/>
        <end position="202"/>
    </location>
</feature>
<feature type="turn" evidence="11">
    <location>
        <begin position="203"/>
        <end position="205"/>
    </location>
</feature>
<feature type="strand" evidence="11">
    <location>
        <begin position="210"/>
        <end position="214"/>
    </location>
</feature>
<feature type="turn" evidence="11">
    <location>
        <begin position="215"/>
        <end position="217"/>
    </location>
</feature>
<feature type="strand" evidence="11">
    <location>
        <begin position="219"/>
        <end position="225"/>
    </location>
</feature>
<feature type="helix" evidence="11">
    <location>
        <begin position="227"/>
        <end position="244"/>
    </location>
</feature>
<feature type="turn" evidence="11">
    <location>
        <begin position="247"/>
        <end position="249"/>
    </location>
</feature>
<feature type="strand" evidence="11">
    <location>
        <begin position="250"/>
        <end position="257"/>
    </location>
</feature>
<feature type="helix" evidence="11">
    <location>
        <begin position="259"/>
        <end position="267"/>
    </location>
</feature>
<feature type="helix" evidence="11">
    <location>
        <begin position="269"/>
        <end position="271"/>
    </location>
</feature>
<feature type="strand" evidence="11">
    <location>
        <begin position="286"/>
        <end position="289"/>
    </location>
</feature>
<feature type="helix" evidence="11">
    <location>
        <begin position="290"/>
        <end position="296"/>
    </location>
</feature>
<feature type="helix" evidence="11">
    <location>
        <begin position="298"/>
        <end position="301"/>
    </location>
</feature>
<feature type="strand" evidence="11">
    <location>
        <begin position="320"/>
        <end position="329"/>
    </location>
</feature>
<feature type="helix" evidence="11">
    <location>
        <begin position="332"/>
        <end position="336"/>
    </location>
</feature>
<feature type="strand" evidence="11">
    <location>
        <begin position="346"/>
        <end position="350"/>
    </location>
</feature>
<feature type="helix" evidence="11">
    <location>
        <begin position="355"/>
        <end position="358"/>
    </location>
</feature>
<feature type="helix" evidence="11">
    <location>
        <begin position="361"/>
        <end position="363"/>
    </location>
</feature>
<feature type="strand" evidence="11">
    <location>
        <begin position="364"/>
        <end position="367"/>
    </location>
</feature>
<feature type="strand" evidence="11">
    <location>
        <begin position="371"/>
        <end position="375"/>
    </location>
</feature>
<feature type="turn" evidence="11">
    <location>
        <begin position="380"/>
        <end position="382"/>
    </location>
</feature>
<feature type="strand" evidence="11">
    <location>
        <begin position="391"/>
        <end position="396"/>
    </location>
</feature>
<feature type="helix" evidence="11">
    <location>
        <begin position="401"/>
        <end position="416"/>
    </location>
</feature>
<feature type="helix" evidence="10">
    <location>
        <begin position="1132"/>
        <end position="1139"/>
    </location>
</feature>
<feature type="strand" evidence="10">
    <location>
        <begin position="1145"/>
        <end position="1147"/>
    </location>
</feature>
<feature type="strand" evidence="10">
    <location>
        <begin position="1153"/>
        <end position="1157"/>
    </location>
</feature>
<feature type="turn" evidence="10">
    <location>
        <begin position="1158"/>
        <end position="1160"/>
    </location>
</feature>
<feature type="strand" evidence="10">
    <location>
        <begin position="1163"/>
        <end position="1165"/>
    </location>
</feature>
<feature type="turn" evidence="10">
    <location>
        <begin position="1168"/>
        <end position="1170"/>
    </location>
</feature>
<feature type="strand" evidence="10">
    <location>
        <begin position="1174"/>
        <end position="1179"/>
    </location>
</feature>
<feature type="helix" evidence="10">
    <location>
        <begin position="1184"/>
        <end position="1198"/>
    </location>
</feature>
<feature type="strand" evidence="10">
    <location>
        <begin position="1199"/>
        <end position="1201"/>
    </location>
</feature>
<feature type="strand" evidence="10">
    <location>
        <begin position="1215"/>
        <end position="1221"/>
    </location>
</feature>
<feature type="turn" evidence="10">
    <location>
        <begin position="1233"/>
        <end position="1235"/>
    </location>
</feature>
<feature type="strand" evidence="10">
    <location>
        <begin position="1236"/>
        <end position="1240"/>
    </location>
</feature>
<feature type="helix" evidence="10">
    <location>
        <begin position="1243"/>
        <end position="1258"/>
    </location>
</feature>
<feature type="helix" evidence="10">
    <location>
        <begin position="1268"/>
        <end position="1272"/>
    </location>
</feature>
<feature type="strand" evidence="10">
    <location>
        <begin position="1281"/>
        <end position="1287"/>
    </location>
</feature>
<feature type="helix" evidence="10">
    <location>
        <begin position="1289"/>
        <end position="1291"/>
    </location>
</feature>
<feature type="helix" evidence="10">
    <location>
        <begin position="1299"/>
        <end position="1302"/>
    </location>
</feature>
<feature type="helix" evidence="10">
    <location>
        <begin position="1304"/>
        <end position="1306"/>
    </location>
</feature>
<feature type="helix" evidence="10">
    <location>
        <begin position="1310"/>
        <end position="1312"/>
    </location>
</feature>
<feature type="strand" evidence="10">
    <location>
        <begin position="1315"/>
        <end position="1323"/>
    </location>
</feature>
<feature type="helix" evidence="10">
    <location>
        <begin position="1327"/>
        <end position="1329"/>
    </location>
</feature>
<feature type="helix" evidence="10">
    <location>
        <begin position="1333"/>
        <end position="1340"/>
    </location>
</feature>
<feature type="strand" evidence="10">
    <location>
        <begin position="1345"/>
        <end position="1347"/>
    </location>
</feature>
<feature type="helix" evidence="10">
    <location>
        <begin position="1352"/>
        <end position="1354"/>
    </location>
</feature>
<feature type="strand" evidence="10">
    <location>
        <begin position="1356"/>
        <end position="1358"/>
    </location>
</feature>
<feature type="strand" evidence="10">
    <location>
        <begin position="1370"/>
        <end position="1374"/>
    </location>
</feature>
<feature type="strand" evidence="10">
    <location>
        <begin position="1379"/>
        <end position="1384"/>
    </location>
</feature>
<reference key="1">
    <citation type="journal article" date="1998" name="Nature">
        <title>Deciphering the biology of Mycobacterium tuberculosis from the complete genome sequence.</title>
        <authorList>
            <person name="Cole S.T."/>
            <person name="Brosch R."/>
            <person name="Parkhill J."/>
            <person name="Garnier T."/>
            <person name="Churcher C.M."/>
            <person name="Harris D.E."/>
            <person name="Gordon S.V."/>
            <person name="Eiglmeier K."/>
            <person name="Gas S."/>
            <person name="Barry C.E. III"/>
            <person name="Tekaia F."/>
            <person name="Badcock K."/>
            <person name="Basham D."/>
            <person name="Brown D."/>
            <person name="Chillingworth T."/>
            <person name="Connor R."/>
            <person name="Davies R.M."/>
            <person name="Devlin K."/>
            <person name="Feltwell T."/>
            <person name="Gentles S."/>
            <person name="Hamlin N."/>
            <person name="Holroyd S."/>
            <person name="Hornsby T."/>
            <person name="Jagels K."/>
            <person name="Krogh A."/>
            <person name="McLean J."/>
            <person name="Moule S."/>
            <person name="Murphy L.D."/>
            <person name="Oliver S."/>
            <person name="Osborne J."/>
            <person name="Quail M.A."/>
            <person name="Rajandream M.A."/>
            <person name="Rogers J."/>
            <person name="Rutter S."/>
            <person name="Seeger K."/>
            <person name="Skelton S."/>
            <person name="Squares S."/>
            <person name="Squares R."/>
            <person name="Sulston J.E."/>
            <person name="Taylor K."/>
            <person name="Whitehead S."/>
            <person name="Barrell B.G."/>
        </authorList>
    </citation>
    <scope>NUCLEOTIDE SEQUENCE [LARGE SCALE GENOMIC DNA]</scope>
    <source>
        <strain>ATCC 25618 / H37Rv</strain>
    </source>
</reference>
<reference key="2">
    <citation type="journal article" date="2009" name="PLoS Pathog.">
        <title>Systematic genetic nomenclature for type VII secretion systems.</title>
        <authorList>
            <person name="Bitter W."/>
            <person name="Houben E.N."/>
            <person name="Bottai D."/>
            <person name="Brodin P."/>
            <person name="Brown E.J."/>
            <person name="Cox J.S."/>
            <person name="Derbyshire K."/>
            <person name="Fortune S.M."/>
            <person name="Gao L.Y."/>
            <person name="Liu J."/>
            <person name="Gey van Pittius N.C."/>
            <person name="Pym A.S."/>
            <person name="Rubin E.J."/>
            <person name="Sherman D.R."/>
            <person name="Cole S.T."/>
            <person name="Brosch R."/>
        </authorList>
    </citation>
    <scope>NOMENCLATURE</scope>
</reference>
<reference key="3">
    <citation type="journal article" date="2011" name="Mol. Cell. Proteomics">
        <title>Proteogenomic analysis of Mycobacterium tuberculosis by high resolution mass spectrometry.</title>
        <authorList>
            <person name="Kelkar D.S."/>
            <person name="Kumar D."/>
            <person name="Kumar P."/>
            <person name="Balakrishnan L."/>
            <person name="Muthusamy B."/>
            <person name="Yadav A.K."/>
            <person name="Shrivastava P."/>
            <person name="Marimuthu A."/>
            <person name="Anand S."/>
            <person name="Sundaram H."/>
            <person name="Kingsbury R."/>
            <person name="Harsha H.C."/>
            <person name="Nair B."/>
            <person name="Prasad T.S."/>
            <person name="Chauhan D.S."/>
            <person name="Katoch K."/>
            <person name="Katoch V.M."/>
            <person name="Kumar P."/>
            <person name="Chaerkady R."/>
            <person name="Ramachandran S."/>
            <person name="Dash D."/>
            <person name="Pandey A."/>
        </authorList>
    </citation>
    <scope>IDENTIFICATION BY MASS SPECTROMETRY [LARGE SCALE ANALYSIS]</scope>
    <source>
        <strain>ATCC 25618 / H37Rv</strain>
    </source>
</reference>
<reference key="4">
    <citation type="journal article" date="2012" name="Mol. Microbiol.">
        <title>Disruption of the ESX-5 system of Mycobacterium tuberculosis causes loss of PPE protein secretion, reduction of cell wall integrity and strong attenuation.</title>
        <authorList>
            <person name="Bottai D."/>
            <person name="Di Luca M."/>
            <person name="Majlessi L."/>
            <person name="Frigui W."/>
            <person name="Simeone R."/>
            <person name="Sayes F."/>
            <person name="Bitter W."/>
            <person name="Brennan M.J."/>
            <person name="Leclerc C."/>
            <person name="Batoni G."/>
            <person name="Campa M."/>
            <person name="Brosch R."/>
            <person name="Esin S."/>
        </authorList>
    </citation>
    <scope>FUNCTION</scope>
    <source>
        <strain>H37Rv</strain>
    </source>
</reference>
<reference key="5">
    <citation type="journal article" date="2012" name="Mol. Microbiol.">
        <title>Composition of the type VII secretion system membrane complex.</title>
        <authorList>
            <person name="Houben E.N."/>
            <person name="Bestebroer J."/>
            <person name="Ummels R."/>
            <person name="Wilson L."/>
            <person name="Piersma S.R."/>
            <person name="Jimenez C.R."/>
            <person name="Ottenhoff T.H."/>
            <person name="Luirink J."/>
            <person name="Bitter W."/>
        </authorList>
    </citation>
    <scope>FUNCTION</scope>
    <scope>DISRUPTION PHENOTYPE</scope>
</reference>
<reference key="6">
    <citation type="journal article" date="2012" name="PLoS ONE">
        <title>The ESX-5 associated eccB-EccC locus is essential for Mycobacterium tuberculosis viability.</title>
        <authorList>
            <person name="Di Luca M."/>
            <person name="Bottai D."/>
            <person name="Batoni G."/>
            <person name="Orgeur M."/>
            <person name="Aulicino A."/>
            <person name="Counoupas C."/>
            <person name="Campa M."/>
            <person name="Brosch R."/>
            <person name="Esin S."/>
        </authorList>
    </citation>
    <scope>FUNCTION</scope>
    <source>
        <strain>H37Rv</strain>
    </source>
</reference>
<evidence type="ECO:0000250" key="1">
    <source>
        <dbReference type="UniProtKB" id="B2HST4"/>
    </source>
</evidence>
<evidence type="ECO:0000255" key="2"/>
<evidence type="ECO:0000255" key="3">
    <source>
        <dbReference type="PROSITE-ProRule" id="PRU00289"/>
    </source>
</evidence>
<evidence type="ECO:0000269" key="4">
    <source>
    </source>
</evidence>
<evidence type="ECO:0000269" key="5">
    <source>
    </source>
</evidence>
<evidence type="ECO:0000269" key="6">
    <source>
    </source>
</evidence>
<evidence type="ECO:0000303" key="7">
    <source>
    </source>
</evidence>
<evidence type="ECO:0000305" key="8"/>
<evidence type="ECO:0000305" key="9">
    <source>
    </source>
</evidence>
<evidence type="ECO:0007829" key="10">
    <source>
        <dbReference type="PDB" id="6J18"/>
    </source>
</evidence>
<evidence type="ECO:0007829" key="11">
    <source>
        <dbReference type="PDB" id="8RIN"/>
    </source>
</evidence>
<keyword id="KW-0002">3D-structure</keyword>
<keyword id="KW-0067">ATP-binding</keyword>
<keyword id="KW-0997">Cell inner membrane</keyword>
<keyword id="KW-1003">Cell membrane</keyword>
<keyword id="KW-0472">Membrane</keyword>
<keyword id="KW-0547">Nucleotide-binding</keyword>
<keyword id="KW-1185">Reference proteome</keyword>
<keyword id="KW-0677">Repeat</keyword>
<keyword id="KW-0812">Transmembrane</keyword>
<keyword id="KW-1133">Transmembrane helix</keyword>
<keyword id="KW-0813">Transport</keyword>
<name>ECCC5_MYCTU</name>
<dbReference type="EMBL" id="AL123456">
    <property type="protein sequence ID" value="CCP44550.1"/>
    <property type="molecule type" value="Genomic_DNA"/>
</dbReference>
<dbReference type="PIR" id="A70929">
    <property type="entry name" value="A70929"/>
</dbReference>
<dbReference type="PIR" id="B70929">
    <property type="entry name" value="B70929"/>
</dbReference>
<dbReference type="RefSeq" id="WP_003408799.1">
    <property type="nucleotide sequence ID" value="NZ_NVQJ01000037.1"/>
</dbReference>
<dbReference type="RefSeq" id="YP_007410461.1">
    <property type="nucleotide sequence ID" value="NC_000962.3"/>
</dbReference>
<dbReference type="PDB" id="6J18">
    <property type="method" value="X-ray"/>
    <property type="resolution" value="2.00 A"/>
    <property type="chains" value="A=1116-1391"/>
</dbReference>
<dbReference type="PDB" id="7NP7">
    <property type="method" value="EM"/>
    <property type="resolution" value="4.03 A"/>
    <property type="chains" value="C1/C2/C3/C4/C5/C6=1-1391"/>
</dbReference>
<dbReference type="PDB" id="7NPR">
    <property type="method" value="EM"/>
    <property type="resolution" value="3.82 A"/>
    <property type="chains" value="C1/C2/C3/C4/C5/C6=1-1391"/>
</dbReference>
<dbReference type="PDB" id="7NPT">
    <property type="method" value="EM"/>
    <property type="resolution" value="3.27 A"/>
    <property type="chains" value="C1=1-1391"/>
</dbReference>
<dbReference type="PDB" id="7NPU">
    <property type="method" value="EM"/>
    <property type="resolution" value="4.48 A"/>
    <property type="chains" value="C1/C2/C3/C4/C5/C6=1-1391"/>
</dbReference>
<dbReference type="PDB" id="7NPV">
    <property type="method" value="EM"/>
    <property type="resolution" value="6.66 A"/>
    <property type="chains" value="C1/C2/C3/C4/C5/C6=1-1391"/>
</dbReference>
<dbReference type="PDB" id="8RIN">
    <property type="method" value="X-ray"/>
    <property type="resolution" value="2.05 A"/>
    <property type="chains" value="A/B=1-16, A/B=119-166, A/B=199-417"/>
</dbReference>
<dbReference type="PDBsum" id="6J18"/>
<dbReference type="PDBsum" id="7NP7"/>
<dbReference type="PDBsum" id="7NPR"/>
<dbReference type="PDBsum" id="7NPT"/>
<dbReference type="PDBsum" id="7NPU"/>
<dbReference type="PDBsum" id="7NPV"/>
<dbReference type="PDBsum" id="8RIN"/>
<dbReference type="EMDB" id="EMD-12514"/>
<dbReference type="EMDB" id="EMD-12517"/>
<dbReference type="EMDB" id="EMD-12520"/>
<dbReference type="EMDB" id="EMD-12521"/>
<dbReference type="EMDB" id="EMD-12522"/>
<dbReference type="SMR" id="P9WNA5"/>
<dbReference type="STRING" id="83332.Rv1783"/>
<dbReference type="PaxDb" id="83332-Rv1783"/>
<dbReference type="DNASU" id="885898"/>
<dbReference type="GeneID" id="885898"/>
<dbReference type="KEGG" id="mtu:Rv1783"/>
<dbReference type="KEGG" id="mtv:RVBD_1783"/>
<dbReference type="TubercuList" id="Rv1783"/>
<dbReference type="eggNOG" id="COG1674">
    <property type="taxonomic scope" value="Bacteria"/>
</dbReference>
<dbReference type="InParanoid" id="P9WNA5"/>
<dbReference type="OrthoDB" id="9807790at2"/>
<dbReference type="Proteomes" id="UP000001584">
    <property type="component" value="Chromosome"/>
</dbReference>
<dbReference type="GO" id="GO:0009274">
    <property type="term" value="C:peptidoglycan-based cell wall"/>
    <property type="evidence" value="ECO:0007005"/>
    <property type="project" value="MTBBASE"/>
</dbReference>
<dbReference type="GO" id="GO:0005886">
    <property type="term" value="C:plasma membrane"/>
    <property type="evidence" value="ECO:0007005"/>
    <property type="project" value="MTBBASE"/>
</dbReference>
<dbReference type="GO" id="GO:0005524">
    <property type="term" value="F:ATP binding"/>
    <property type="evidence" value="ECO:0007669"/>
    <property type="project" value="UniProtKB-KW"/>
</dbReference>
<dbReference type="GO" id="GO:0016887">
    <property type="term" value="F:ATP hydrolysis activity"/>
    <property type="evidence" value="ECO:0007669"/>
    <property type="project" value="InterPro"/>
</dbReference>
<dbReference type="GO" id="GO:0003677">
    <property type="term" value="F:DNA binding"/>
    <property type="evidence" value="ECO:0007669"/>
    <property type="project" value="InterPro"/>
</dbReference>
<dbReference type="FunFam" id="3.40.50.300:FF:002667">
    <property type="entry name" value="ESX-5 secretion system protein EccC5"/>
    <property type="match status" value="1"/>
</dbReference>
<dbReference type="FunFam" id="3.40.50.300:FF:001298">
    <property type="entry name" value="Type VII secretion protein EccC"/>
    <property type="match status" value="1"/>
</dbReference>
<dbReference type="FunFam" id="3.40.50.300:FF:001338">
    <property type="entry name" value="Type VII secretion protein EccC"/>
    <property type="match status" value="1"/>
</dbReference>
<dbReference type="FunFam" id="3.40.50.300:FF:002200">
    <property type="entry name" value="Type VII secretion protein EccC"/>
    <property type="match status" value="1"/>
</dbReference>
<dbReference type="Gene3D" id="3.40.50.300">
    <property type="entry name" value="P-loop containing nucleotide triphosphate hydrolases"/>
    <property type="match status" value="4"/>
</dbReference>
<dbReference type="InterPro" id="IPR003593">
    <property type="entry name" value="AAA+_ATPase"/>
</dbReference>
<dbReference type="InterPro" id="IPR023836">
    <property type="entry name" value="EccCa-like_Actinobacteria"/>
</dbReference>
<dbReference type="InterPro" id="IPR023837">
    <property type="entry name" value="EccCb-like_Actinobacteria"/>
</dbReference>
<dbReference type="InterPro" id="IPR050206">
    <property type="entry name" value="FtsK/SpoIIIE/SftA"/>
</dbReference>
<dbReference type="InterPro" id="IPR002543">
    <property type="entry name" value="FtsK_dom"/>
</dbReference>
<dbReference type="InterPro" id="IPR027417">
    <property type="entry name" value="P-loop_NTPase"/>
</dbReference>
<dbReference type="NCBIfam" id="TIGR03924">
    <property type="entry name" value="T7SS_EccC_a"/>
    <property type="match status" value="1"/>
</dbReference>
<dbReference type="NCBIfam" id="TIGR03925">
    <property type="entry name" value="T7SS_EccC_b"/>
    <property type="match status" value="1"/>
</dbReference>
<dbReference type="PANTHER" id="PTHR22683">
    <property type="entry name" value="SPORULATION PROTEIN RELATED"/>
    <property type="match status" value="1"/>
</dbReference>
<dbReference type="PANTHER" id="PTHR22683:SF1">
    <property type="entry name" value="TYPE VII SECRETION SYSTEM PROTEIN ESSC"/>
    <property type="match status" value="1"/>
</dbReference>
<dbReference type="Pfam" id="PF01580">
    <property type="entry name" value="FtsK_SpoIIIE"/>
    <property type="match status" value="2"/>
</dbReference>
<dbReference type="SMART" id="SM00382">
    <property type="entry name" value="AAA"/>
    <property type="match status" value="3"/>
</dbReference>
<dbReference type="SUPFAM" id="SSF52540">
    <property type="entry name" value="P-loop containing nucleoside triphosphate hydrolases"/>
    <property type="match status" value="2"/>
</dbReference>
<dbReference type="PROSITE" id="PS50901">
    <property type="entry name" value="FTSK"/>
    <property type="match status" value="3"/>
</dbReference>
<comment type="function">
    <text evidence="4 5 6">Part of the ESX-5 specialized secretion system, which is responsible for the secretion of EsxN and a number of PE_PGRS and PPE proteins, including PPE41.</text>
</comment>
<comment type="subunit">
    <text evidence="1">Part of the ESX-5 / type VII secretion system (T7SS), which is composed of cytosolic and membrane components. The ESX-5 membrane complex is composed of EccB5, EccC5, EccD5 and EccE5.</text>
</comment>
<comment type="subcellular location">
    <subcellularLocation>
        <location evidence="1">Cell inner membrane</location>
        <topology evidence="2">Multi-pass membrane protein</topology>
    </subcellularLocation>
</comment>
<comment type="disruption phenotype">
    <text evidence="5">Mutants are defective in the secretion of EsxN, PPE41 and PE_PGRS proteins.</text>
</comment>
<comment type="miscellaneous">
    <text evidence="6">Part of the eccB5-eccC5 operon, which is essential for in vitro growth.</text>
</comment>
<comment type="caution">
    <text evidence="9">Was originally thought to be the product of two separate ORFs, eccCa5 and eccCb5.</text>
</comment>
<organism>
    <name type="scientific">Mycobacterium tuberculosis (strain ATCC 25618 / H37Rv)</name>
    <dbReference type="NCBI Taxonomy" id="83332"/>
    <lineage>
        <taxon>Bacteria</taxon>
        <taxon>Bacillati</taxon>
        <taxon>Actinomycetota</taxon>
        <taxon>Actinomycetes</taxon>
        <taxon>Mycobacteriales</taxon>
        <taxon>Mycobacteriaceae</taxon>
        <taxon>Mycobacterium</taxon>
        <taxon>Mycobacterium tuberculosis complex</taxon>
    </lineage>
</organism>
<accession>P9WNA5</accession>
<accession>L0T992</accession>
<accession>O53934</accession>
<accession>O53935</accession>
<accession>Q8VJW6</accession>
<proteinExistence type="evidence at protein level"/>